<proteinExistence type="inferred from homology"/>
<evidence type="ECO:0000255" key="1">
    <source>
        <dbReference type="HAMAP-Rule" id="MF_01694"/>
    </source>
</evidence>
<evidence type="ECO:0000255" key="2">
    <source>
        <dbReference type="PROSITE-ProRule" id="PRU01266"/>
    </source>
</evidence>
<keyword id="KW-0001">2Fe-2S</keyword>
<keyword id="KW-0004">4Fe-4S</keyword>
<keyword id="KW-0093">Biotin biosynthesis</keyword>
<keyword id="KW-0408">Iron</keyword>
<keyword id="KW-0411">Iron-sulfur</keyword>
<keyword id="KW-0479">Metal-binding</keyword>
<keyword id="KW-0949">S-adenosyl-L-methionine</keyword>
<keyword id="KW-0808">Transferase</keyword>
<sequence length="337" mass="38251">MLNFLQSVQFVKEVEKKIIEYDKDIAFNEAIILYEIAKHDADLVKNLASTINQHYFKNTIELCSIYPAKVGLCPQDCKFCSQSIHHSCLIEIKDLAALDEVIEYLEYVISFPIKRFCLVTSGEKLDDSEFEKILDIYSHISKNYNILLCASLGFLTQERAKKLLKVGVVKYHNNLETSSTYFKNICSTHTQQQKIETLKIAKEAGLQICSGGIISMGEDMIERIKLAFELRELDVDSVPINILNPIKGTPLEDIKIIDKNEIFITLALFRIVLPKKTILLAGGKENALGDMEKMAYECGVNGCMVGNYLTTRGMGIREKIEMLESLDLKFQTNMHNN</sequence>
<protein>
    <recommendedName>
        <fullName evidence="1">Biotin synthase</fullName>
        <ecNumber evidence="1">2.8.1.6</ecNumber>
    </recommendedName>
</protein>
<name>BIOB_CALBD</name>
<organism>
    <name type="scientific">Caldicellulosiruptor bescii (strain ATCC BAA-1888 / DSM 6725 / KCTC 15123 / Z-1320)</name>
    <name type="common">Anaerocellum thermophilum</name>
    <dbReference type="NCBI Taxonomy" id="521460"/>
    <lineage>
        <taxon>Bacteria</taxon>
        <taxon>Bacillati</taxon>
        <taxon>Bacillota</taxon>
        <taxon>Bacillota incertae sedis</taxon>
        <taxon>Caldicellulosiruptorales</taxon>
        <taxon>Caldicellulosiruptoraceae</taxon>
        <taxon>Caldicellulosiruptor</taxon>
    </lineage>
</organism>
<accession>B9MP50</accession>
<comment type="function">
    <text evidence="1">Catalyzes the conversion of dethiobiotin (DTB) to biotin by the insertion of a sulfur atom into dethiobiotin via a radical-based mechanism.</text>
</comment>
<comment type="catalytic activity">
    <reaction evidence="1">
        <text>(4R,5S)-dethiobiotin + (sulfur carrier)-SH + 2 reduced [2Fe-2S]-[ferredoxin] + 2 S-adenosyl-L-methionine = (sulfur carrier)-H + biotin + 2 5'-deoxyadenosine + 2 L-methionine + 2 oxidized [2Fe-2S]-[ferredoxin]</text>
        <dbReference type="Rhea" id="RHEA:22060"/>
        <dbReference type="Rhea" id="RHEA-COMP:10000"/>
        <dbReference type="Rhea" id="RHEA-COMP:10001"/>
        <dbReference type="Rhea" id="RHEA-COMP:14737"/>
        <dbReference type="Rhea" id="RHEA-COMP:14739"/>
        <dbReference type="ChEBI" id="CHEBI:17319"/>
        <dbReference type="ChEBI" id="CHEBI:29917"/>
        <dbReference type="ChEBI" id="CHEBI:33737"/>
        <dbReference type="ChEBI" id="CHEBI:33738"/>
        <dbReference type="ChEBI" id="CHEBI:57586"/>
        <dbReference type="ChEBI" id="CHEBI:57844"/>
        <dbReference type="ChEBI" id="CHEBI:59789"/>
        <dbReference type="ChEBI" id="CHEBI:64428"/>
        <dbReference type="ChEBI" id="CHEBI:149473"/>
        <dbReference type="EC" id="2.8.1.6"/>
    </reaction>
</comment>
<comment type="cofactor">
    <cofactor evidence="1">
        <name>[4Fe-4S] cluster</name>
        <dbReference type="ChEBI" id="CHEBI:49883"/>
    </cofactor>
    <text evidence="1">Binds 1 [4Fe-4S] cluster. The cluster is coordinated with 3 cysteines and an exchangeable S-adenosyl-L-methionine.</text>
</comment>
<comment type="cofactor">
    <cofactor evidence="1">
        <name>[2Fe-2S] cluster</name>
        <dbReference type="ChEBI" id="CHEBI:190135"/>
    </cofactor>
    <text evidence="1">Binds 1 [2Fe-2S] cluster. The cluster is coordinated with 3 cysteines and 1 arginine.</text>
</comment>
<comment type="pathway">
    <text evidence="1">Cofactor biosynthesis; biotin biosynthesis; biotin from 7,8-diaminononanoate: step 2/2.</text>
</comment>
<comment type="subunit">
    <text evidence="1">Homodimer.</text>
</comment>
<comment type="similarity">
    <text evidence="1">Belongs to the radical SAM superfamily. Biotin synthase family.</text>
</comment>
<dbReference type="EC" id="2.8.1.6" evidence="1"/>
<dbReference type="EMBL" id="CP001393">
    <property type="protein sequence ID" value="ACM61609.1"/>
    <property type="molecule type" value="Genomic_DNA"/>
</dbReference>
<dbReference type="RefSeq" id="WP_015908859.1">
    <property type="nucleotide sequence ID" value="NC_012034.1"/>
</dbReference>
<dbReference type="SMR" id="B9MP50"/>
<dbReference type="STRING" id="521460.Athe_2541"/>
<dbReference type="GeneID" id="31773896"/>
<dbReference type="KEGG" id="ate:Athe_2541"/>
<dbReference type="eggNOG" id="COG0502">
    <property type="taxonomic scope" value="Bacteria"/>
</dbReference>
<dbReference type="HOGENOM" id="CLU_033172_2_1_9"/>
<dbReference type="UniPathway" id="UPA00078">
    <property type="reaction ID" value="UER00162"/>
</dbReference>
<dbReference type="Proteomes" id="UP000007723">
    <property type="component" value="Chromosome"/>
</dbReference>
<dbReference type="GO" id="GO:0051537">
    <property type="term" value="F:2 iron, 2 sulfur cluster binding"/>
    <property type="evidence" value="ECO:0007669"/>
    <property type="project" value="UniProtKB-KW"/>
</dbReference>
<dbReference type="GO" id="GO:0051539">
    <property type="term" value="F:4 iron, 4 sulfur cluster binding"/>
    <property type="evidence" value="ECO:0007669"/>
    <property type="project" value="UniProtKB-KW"/>
</dbReference>
<dbReference type="GO" id="GO:0004076">
    <property type="term" value="F:biotin synthase activity"/>
    <property type="evidence" value="ECO:0007669"/>
    <property type="project" value="UniProtKB-UniRule"/>
</dbReference>
<dbReference type="GO" id="GO:0005506">
    <property type="term" value="F:iron ion binding"/>
    <property type="evidence" value="ECO:0007669"/>
    <property type="project" value="UniProtKB-UniRule"/>
</dbReference>
<dbReference type="GO" id="GO:0009102">
    <property type="term" value="P:biotin biosynthetic process"/>
    <property type="evidence" value="ECO:0007669"/>
    <property type="project" value="UniProtKB-UniRule"/>
</dbReference>
<dbReference type="CDD" id="cd01335">
    <property type="entry name" value="Radical_SAM"/>
    <property type="match status" value="1"/>
</dbReference>
<dbReference type="Gene3D" id="3.20.20.70">
    <property type="entry name" value="Aldolase class I"/>
    <property type="match status" value="1"/>
</dbReference>
<dbReference type="HAMAP" id="MF_01694">
    <property type="entry name" value="BioB"/>
    <property type="match status" value="1"/>
</dbReference>
<dbReference type="InterPro" id="IPR013785">
    <property type="entry name" value="Aldolase_TIM"/>
</dbReference>
<dbReference type="InterPro" id="IPR010722">
    <property type="entry name" value="BATS_dom"/>
</dbReference>
<dbReference type="InterPro" id="IPR002684">
    <property type="entry name" value="Biotin_synth/BioAB"/>
</dbReference>
<dbReference type="InterPro" id="IPR024177">
    <property type="entry name" value="Biotin_synthase"/>
</dbReference>
<dbReference type="InterPro" id="IPR006638">
    <property type="entry name" value="Elp3/MiaA/NifB-like_rSAM"/>
</dbReference>
<dbReference type="InterPro" id="IPR007197">
    <property type="entry name" value="rSAM"/>
</dbReference>
<dbReference type="NCBIfam" id="TIGR00433">
    <property type="entry name" value="bioB"/>
    <property type="match status" value="1"/>
</dbReference>
<dbReference type="PANTHER" id="PTHR22976">
    <property type="entry name" value="BIOTIN SYNTHASE"/>
    <property type="match status" value="1"/>
</dbReference>
<dbReference type="PANTHER" id="PTHR22976:SF2">
    <property type="entry name" value="BIOTIN SYNTHASE, MITOCHONDRIAL"/>
    <property type="match status" value="1"/>
</dbReference>
<dbReference type="Pfam" id="PF06968">
    <property type="entry name" value="BATS"/>
    <property type="match status" value="1"/>
</dbReference>
<dbReference type="Pfam" id="PF04055">
    <property type="entry name" value="Radical_SAM"/>
    <property type="match status" value="1"/>
</dbReference>
<dbReference type="PIRSF" id="PIRSF001619">
    <property type="entry name" value="Biotin_synth"/>
    <property type="match status" value="1"/>
</dbReference>
<dbReference type="SFLD" id="SFLDG01278">
    <property type="entry name" value="biotin_synthase_like"/>
    <property type="match status" value="1"/>
</dbReference>
<dbReference type="SFLD" id="SFLDS00029">
    <property type="entry name" value="Radical_SAM"/>
    <property type="match status" value="1"/>
</dbReference>
<dbReference type="SMART" id="SM00876">
    <property type="entry name" value="BATS"/>
    <property type="match status" value="1"/>
</dbReference>
<dbReference type="SMART" id="SM00729">
    <property type="entry name" value="Elp3"/>
    <property type="match status" value="1"/>
</dbReference>
<dbReference type="SUPFAM" id="SSF102114">
    <property type="entry name" value="Radical SAM enzymes"/>
    <property type="match status" value="1"/>
</dbReference>
<dbReference type="PROSITE" id="PS51918">
    <property type="entry name" value="RADICAL_SAM"/>
    <property type="match status" value="1"/>
</dbReference>
<reference key="1">
    <citation type="submission" date="2009-01" db="EMBL/GenBank/DDBJ databases">
        <title>Complete sequence of chromosome of Caldicellulosiruptor becscii DSM 6725.</title>
        <authorList>
            <person name="Lucas S."/>
            <person name="Copeland A."/>
            <person name="Lapidus A."/>
            <person name="Glavina del Rio T."/>
            <person name="Tice H."/>
            <person name="Bruce D."/>
            <person name="Goodwin L."/>
            <person name="Pitluck S."/>
            <person name="Sims D."/>
            <person name="Meincke L."/>
            <person name="Brettin T."/>
            <person name="Detter J.C."/>
            <person name="Han C."/>
            <person name="Larimer F."/>
            <person name="Land M."/>
            <person name="Hauser L."/>
            <person name="Kyrpides N."/>
            <person name="Ovchinnikova G."/>
            <person name="Kataeva I."/>
            <person name="Adams M.W.W."/>
        </authorList>
    </citation>
    <scope>NUCLEOTIDE SEQUENCE [LARGE SCALE GENOMIC DNA]</scope>
    <source>
        <strain>ATCC BAA-1888 / DSM 6725 / KCTC 15123 / Z-1320</strain>
    </source>
</reference>
<gene>
    <name evidence="1" type="primary">bioB</name>
    <name type="ordered locus">Athe_2541</name>
</gene>
<feature type="chain" id="PRO_0000381203" description="Biotin synthase">
    <location>
        <begin position="1"/>
        <end position="337"/>
    </location>
</feature>
<feature type="domain" description="Radical SAM core" evidence="2">
    <location>
        <begin position="55"/>
        <end position="284"/>
    </location>
</feature>
<feature type="binding site" evidence="1">
    <location>
        <position position="73"/>
    </location>
    <ligand>
        <name>[4Fe-4S] cluster</name>
        <dbReference type="ChEBI" id="CHEBI:49883"/>
        <note>4Fe-4S-S-AdoMet</note>
    </ligand>
</feature>
<feature type="binding site" evidence="1">
    <location>
        <position position="77"/>
    </location>
    <ligand>
        <name>[4Fe-4S] cluster</name>
        <dbReference type="ChEBI" id="CHEBI:49883"/>
        <note>4Fe-4S-S-AdoMet</note>
    </ligand>
</feature>
<feature type="binding site" evidence="1">
    <location>
        <position position="80"/>
    </location>
    <ligand>
        <name>[4Fe-4S] cluster</name>
        <dbReference type="ChEBI" id="CHEBI:49883"/>
        <note>4Fe-4S-S-AdoMet</note>
    </ligand>
</feature>
<feature type="binding site" evidence="1">
    <location>
        <position position="117"/>
    </location>
    <ligand>
        <name>[2Fe-2S] cluster</name>
        <dbReference type="ChEBI" id="CHEBI:190135"/>
    </ligand>
</feature>
<feature type="binding site" evidence="1">
    <location>
        <position position="149"/>
    </location>
    <ligand>
        <name>[2Fe-2S] cluster</name>
        <dbReference type="ChEBI" id="CHEBI:190135"/>
    </ligand>
</feature>
<feature type="binding site" evidence="1">
    <location>
        <position position="209"/>
    </location>
    <ligand>
        <name>[2Fe-2S] cluster</name>
        <dbReference type="ChEBI" id="CHEBI:190135"/>
    </ligand>
</feature>